<sequence>ADAAPTVSIFPPSTEQLATGGASVVCLMNNFYPRDISVKWKIDGTERRDGVLDSVTDQDSKDSTYSMSSTLSLTKADYESHNLYTCEVVHKTSSSPVVKSFNRNEC</sequence>
<protein>
    <recommendedName>
        <fullName>Ig kappa chain C region, B allele</fullName>
    </recommendedName>
</protein>
<proteinExistence type="evidence at protein level"/>
<organism>
    <name type="scientific">Rattus norvegicus</name>
    <name type="common">Rat</name>
    <dbReference type="NCBI Taxonomy" id="10116"/>
    <lineage>
        <taxon>Eukaryota</taxon>
        <taxon>Metazoa</taxon>
        <taxon>Chordata</taxon>
        <taxon>Craniata</taxon>
        <taxon>Vertebrata</taxon>
        <taxon>Euteleostomi</taxon>
        <taxon>Mammalia</taxon>
        <taxon>Eutheria</taxon>
        <taxon>Euarchontoglires</taxon>
        <taxon>Glires</taxon>
        <taxon>Rodentia</taxon>
        <taxon>Myomorpha</taxon>
        <taxon>Muroidea</taxon>
        <taxon>Muridae</taxon>
        <taxon>Murinae</taxon>
        <taxon>Rattus</taxon>
    </lineage>
</organism>
<name>KACB_RAT</name>
<accession>P01835</accession>
<keyword id="KW-0002">3D-structure</keyword>
<keyword id="KW-0903">Direct protein sequencing</keyword>
<keyword id="KW-1015">Disulfide bond</keyword>
<keyword id="KW-0393">Immunoglobulin domain</keyword>
<keyword id="KW-1185">Reference proteome</keyword>
<feature type="chain" id="PRO_0000153605" description="Ig kappa chain C region, B allele">
    <location>
        <begin position="1" status="less than"/>
        <end position="106"/>
    </location>
</feature>
<feature type="domain" description="Ig-like">
    <location>
        <begin position="5"/>
        <end position="102"/>
    </location>
</feature>
<feature type="disulfide bond">
    <location>
        <begin position="26"/>
        <end position="86"/>
    </location>
</feature>
<feature type="disulfide bond" description="Interchain (with a heavy chain)">
    <location>
        <position position="106"/>
    </location>
</feature>
<feature type="sequence conflict" description="In Ref. 2; AA sequence." evidence="1" ref="2">
    <original>D</original>
    <variation>N</variation>
    <location>
        <position position="2"/>
    </location>
</feature>
<feature type="sequence conflict" description="In Ref. 2; AA sequence." evidence="1" ref="2">
    <original>N</original>
    <variation>K</variation>
    <location>
        <position position="30"/>
    </location>
</feature>
<feature type="sequence conflict" description="In Ref. 2; AA sequence." evidence="1" ref="2">
    <location>
        <position position="48"/>
    </location>
</feature>
<feature type="sequence conflict" description="In Ref. 2; AA sequence." evidence="1" ref="2">
    <original>E</original>
    <variation>Q</variation>
    <location>
        <position position="79"/>
    </location>
</feature>
<feature type="sequence conflict" description="In Ref. 2; AA sequence." evidence="1" ref="2">
    <original>E</original>
    <variation>Q</variation>
    <location>
        <position position="87"/>
    </location>
</feature>
<feature type="sequence conflict" description="In Ref. 2; AA sequence." evidence="1" ref="2">
    <original>V</original>
    <variation>VW</variation>
    <location>
        <position position="98"/>
    </location>
</feature>
<feature type="sequence conflict" description="In Ref. 2; AA sequence." evidence="1" ref="2">
    <original>S</original>
    <variation>N</variation>
    <location>
        <position position="100"/>
    </location>
</feature>
<feature type="non-terminal residue">
    <location>
        <position position="1"/>
    </location>
</feature>
<feature type="strand" evidence="4">
    <location>
        <begin position="6"/>
        <end position="10"/>
    </location>
</feature>
<feature type="helix" evidence="4">
    <location>
        <begin position="14"/>
        <end position="17"/>
    </location>
</feature>
<feature type="turn" evidence="4">
    <location>
        <begin position="18"/>
        <end position="20"/>
    </location>
</feature>
<feature type="strand" evidence="4">
    <location>
        <begin position="21"/>
        <end position="34"/>
    </location>
</feature>
<feature type="strand" evidence="4">
    <location>
        <begin position="37"/>
        <end position="42"/>
    </location>
</feature>
<feature type="strand" evidence="3">
    <location>
        <begin position="45"/>
        <end position="47"/>
    </location>
</feature>
<feature type="strand" evidence="4">
    <location>
        <begin position="51"/>
        <end position="55"/>
    </location>
</feature>
<feature type="turn" evidence="4">
    <location>
        <begin position="60"/>
        <end position="62"/>
    </location>
</feature>
<feature type="strand" evidence="4">
    <location>
        <begin position="65"/>
        <end position="74"/>
    </location>
</feature>
<feature type="helix" evidence="4">
    <location>
        <begin position="75"/>
        <end position="79"/>
    </location>
</feature>
<feature type="strand" evidence="4">
    <location>
        <begin position="83"/>
        <end position="89"/>
    </location>
</feature>
<feature type="turn" evidence="3">
    <location>
        <begin position="91"/>
        <end position="93"/>
    </location>
</feature>
<feature type="strand" evidence="2">
    <location>
        <begin position="94"/>
        <end position="96"/>
    </location>
</feature>
<feature type="strand" evidence="4">
    <location>
        <begin position="97"/>
        <end position="102"/>
    </location>
</feature>
<dbReference type="PIR" id="A93901">
    <property type="entry name" value="K1RTB"/>
</dbReference>
<dbReference type="PDB" id="1BFO">
    <property type="method" value="X-ray"/>
    <property type="resolution" value="2.60 A"/>
    <property type="chains" value="A/C/E/G=1-106"/>
</dbReference>
<dbReference type="PDB" id="1C5D">
    <property type="method" value="X-ray"/>
    <property type="resolution" value="2.40 A"/>
    <property type="chains" value="A/L=1-106"/>
</dbReference>
<dbReference type="PDB" id="1FN4">
    <property type="method" value="X-ray"/>
    <property type="resolution" value="2.80 A"/>
    <property type="chains" value="A/C=4-106"/>
</dbReference>
<dbReference type="PDB" id="1LK3">
    <property type="method" value="X-ray"/>
    <property type="resolution" value="1.91 A"/>
    <property type="chains" value="L/M=1-103"/>
</dbReference>
<dbReference type="PDB" id="4UAO">
    <property type="method" value="X-ray"/>
    <property type="resolution" value="3.10 A"/>
    <property type="chains" value="B=1-106"/>
</dbReference>
<dbReference type="PDBsum" id="1BFO"/>
<dbReference type="PDBsum" id="1C5D"/>
<dbReference type="PDBsum" id="1FN4"/>
<dbReference type="PDBsum" id="1LK3"/>
<dbReference type="PDBsum" id="4UAO"/>
<dbReference type="SMR" id="P01835"/>
<dbReference type="FunCoup" id="P01835">
    <property type="interactions" value="169"/>
</dbReference>
<dbReference type="STRING" id="10116.ENSRNOP00000029319"/>
<dbReference type="PaxDb" id="10116-ENSRNOP00000066644"/>
<dbReference type="AGR" id="RGD:1561547"/>
<dbReference type="eggNOG" id="ENOG502RZ26">
    <property type="taxonomic scope" value="Eukaryota"/>
</dbReference>
<dbReference type="HOGENOM" id="CLU_077975_3_0_1"/>
<dbReference type="InParanoid" id="P01835"/>
<dbReference type="EvolutionaryTrace" id="P01835"/>
<dbReference type="Proteomes" id="UP000002494">
    <property type="component" value="Unplaced"/>
</dbReference>
<dbReference type="GO" id="GO:0042105">
    <property type="term" value="C:alpha-beta T cell receptor complex"/>
    <property type="evidence" value="ECO:0000318"/>
    <property type="project" value="GO_Central"/>
</dbReference>
<dbReference type="CDD" id="cd07699">
    <property type="entry name" value="IgC1_L"/>
    <property type="match status" value="1"/>
</dbReference>
<dbReference type="FunFam" id="2.60.40.10:FF:000283">
    <property type="entry name" value="Immunoglobulin kappa constant"/>
    <property type="match status" value="1"/>
</dbReference>
<dbReference type="Gene3D" id="2.60.40.10">
    <property type="entry name" value="Immunoglobulins"/>
    <property type="match status" value="1"/>
</dbReference>
<dbReference type="InterPro" id="IPR007110">
    <property type="entry name" value="Ig-like_dom"/>
</dbReference>
<dbReference type="InterPro" id="IPR036179">
    <property type="entry name" value="Ig-like_dom_sf"/>
</dbReference>
<dbReference type="InterPro" id="IPR013783">
    <property type="entry name" value="Ig-like_fold"/>
</dbReference>
<dbReference type="InterPro" id="IPR003006">
    <property type="entry name" value="Ig/MHC_CS"/>
</dbReference>
<dbReference type="InterPro" id="IPR003597">
    <property type="entry name" value="Ig_C1-set"/>
</dbReference>
<dbReference type="InterPro" id="IPR050380">
    <property type="entry name" value="Immune_Resp_Modulators"/>
</dbReference>
<dbReference type="PANTHER" id="PTHR23411">
    <property type="entry name" value="TAPASIN"/>
    <property type="match status" value="1"/>
</dbReference>
<dbReference type="Pfam" id="PF07654">
    <property type="entry name" value="C1-set"/>
    <property type="match status" value="1"/>
</dbReference>
<dbReference type="SMART" id="SM00407">
    <property type="entry name" value="IGc1"/>
    <property type="match status" value="1"/>
</dbReference>
<dbReference type="SUPFAM" id="SSF48726">
    <property type="entry name" value="Immunoglobulin"/>
    <property type="match status" value="1"/>
</dbReference>
<dbReference type="PROSITE" id="PS50835">
    <property type="entry name" value="IG_LIKE"/>
    <property type="match status" value="1"/>
</dbReference>
<dbReference type="PROSITE" id="PS00290">
    <property type="entry name" value="IG_MHC"/>
    <property type="match status" value="1"/>
</dbReference>
<evidence type="ECO:0000305" key="1"/>
<evidence type="ECO:0007829" key="2">
    <source>
        <dbReference type="PDB" id="1BFO"/>
    </source>
</evidence>
<evidence type="ECO:0007829" key="3">
    <source>
        <dbReference type="PDB" id="1C5D"/>
    </source>
</evidence>
<evidence type="ECO:0007829" key="4">
    <source>
        <dbReference type="PDB" id="1LK3"/>
    </source>
</evidence>
<reference key="1">
    <citation type="journal article" date="1981" name="Proc. Natl. Acad. Sci. U.S.A.">
        <title>Allelic forms of rat kappa chain genes: evidence for strong selection at the level of nucleotide sequence.</title>
        <authorList>
            <person name="Sheppard H.W."/>
            <person name="Gutman G.A."/>
        </authorList>
    </citation>
    <scope>NUCLEOTIDE SEQUENCE</scope>
    <source>
        <strain>Louvain</strain>
    </source>
</reference>
<reference key="2">
    <citation type="journal article" date="1975" name="J. Immunol.">
        <title>The primary structure of a rat kappa Bence Jones protein: phylogenetic relationships of V- and C-region genes.</title>
        <authorList>
            <person name="Starace V."/>
            <person name="Querinjean P."/>
        </authorList>
    </citation>
    <scope>PROTEIN SEQUENCE (BENCE-JONES PROTEIN S211)</scope>
</reference>